<accession>Q873X9</accession>
<accession>Q4WB85</accession>
<gene>
    <name type="primary">chiB1</name>
</gene>
<reference key="1">
    <citation type="journal article" date="2003" name="Microbiology">
        <title>Disruption of the gene encoding the ChiB1 chitinase of Aspergillus fumigatus and characterization of a recombinant gene product.</title>
        <authorList>
            <person name="Jaques A.K."/>
            <person name="Fukamizo T."/>
            <person name="Hall D."/>
            <person name="Barton R.C."/>
            <person name="Escott G.M."/>
            <person name="Parkinson T."/>
            <person name="Hitchcock C.A."/>
            <person name="Adams D.J."/>
        </authorList>
    </citation>
    <scope>NUCLEOTIDE SEQUENCE [GENOMIC DNA]</scope>
    <scope>SUBCELLULAR LOCATION</scope>
    <scope>GLYCOSYLATION</scope>
    <scope>CATALYTIC ACTIVITY</scope>
    <scope>DISRUPTION PHENOTYPE</scope>
    <source>
        <strain>NIH 5233 / ATCC 13073</strain>
    </source>
</reference>
<reference key="2">
    <citation type="journal article" date="2004" name="Acta Crystallogr. D">
        <title>Crystallization and preliminary crystallographic analysis of a native chitinase from the fungal pathogen Aspergillus fumigatus YJ-407.</title>
        <authorList>
            <person name="Hu H."/>
            <person name="Wang G."/>
            <person name="Yang H."/>
            <person name="Zhou J."/>
            <person name="Mo L."/>
            <person name="Yang K."/>
            <person name="Jin C."/>
            <person name="Jin C."/>
            <person name="Rao Z."/>
        </authorList>
    </citation>
    <scope>CRYSTALLIZATION</scope>
</reference>
<reference key="3">
    <citation type="journal article" date="2005" name="Arch. Microbiol.">
        <title>Differential expression and extent of fungal/plant and fungal/bacterial chitinases of Aspergillus fumigatus.</title>
        <authorList>
            <person name="Taib M."/>
            <person name="Pinney J.W."/>
            <person name="Westhead D.R."/>
            <person name="McDowall K.J."/>
            <person name="Adams D.J."/>
        </authorList>
    </citation>
    <scope>INDUCTION</scope>
    <scope>SUBCELLULAR LOCATION</scope>
    <scope>CATALYTIC ACTIVITY</scope>
</reference>
<reference key="4">
    <citation type="journal article" date="2009" name="Glycoconj. J.">
        <title>Mutation of Trp137 to glutamate completely removes transglycosyl activity associated with the Aspergillus fumigatus AfChiB1.</title>
        <authorList>
            <person name="Lu Y."/>
            <person name="Yang H."/>
            <person name="Hu H."/>
            <person name="Wang Y."/>
            <person name="Rao Z."/>
            <person name="Jin C."/>
        </authorList>
    </citation>
    <scope>MUTAGENESIS OF TRP-137; MET-243 AND ASP-246</scope>
    <scope>CATALYTIC ACTIVITY</scope>
    <scope>BIOPHYSICOCHEMICAL PROPERTIES</scope>
</reference>
<reference key="5">
    <citation type="submission" date="2004-08" db="PDB data bank">
        <title>Crystal structure of a native chitinase from Aspergillus fumigatus YJ-407.</title>
        <authorList>
            <person name="Hu H."/>
            <person name="Wang G."/>
            <person name="Yang H."/>
            <person name="Zhou J."/>
            <person name="Mo L."/>
            <person name="Yang K."/>
            <person name="Jin C."/>
            <person name="Jin C."/>
            <person name="Rao Z."/>
        </authorList>
    </citation>
    <scope>X-RAY CRYSTALLOGRAPHY (2.10 ANGSTROMS) OF 39-433 IN COMPLEX WITH INHIBITOR</scope>
</reference>
<reference evidence="12 13 14" key="6">
    <citation type="journal article" date="2005" name="Chem. Biol.">
        <title>Specificity and affinity of natural product cyclopentapeptide inhibitors against A. fumigatus, human, and bacterial chitinases.</title>
        <authorList>
            <person name="Rao F.V."/>
            <person name="Houston D.R."/>
            <person name="Boot R.G."/>
            <person name="Aerts J.M."/>
            <person name="Hodkinson M."/>
            <person name="Adams D.J."/>
            <person name="Shiomi K."/>
            <person name="Omura S."/>
            <person name="van Aalten D.M."/>
        </authorList>
    </citation>
    <scope>X-RAY CRYSTALLOGRAPHY (1.70 ANGSTROMS) IN COMPLEX WITH INHIBITOR</scope>
    <scope>CATALYTIC ACTIVITY</scope>
    <scope>BIOPHYSICOCHEMICAL PROPERTIES</scope>
    <scope>MUTAGENESIS OF TRP-137; THR-138; ASP-175; GLU-177; ALA-217; MET-243; TYR-245; ASP-246; PHE-251; ARG-301 AND GLU-322</scope>
    <scope>ACTIVITY REGULATION</scope>
</reference>
<reference evidence="15 16 17 18" key="7">
    <citation type="journal article" date="2005" name="Chem. Biol.">
        <title>Methylxanthine drugs are chitinase inhibitors: investigation of inhibition and binding modes.</title>
        <authorList>
            <person name="Rao F.V."/>
            <person name="Andersen O.A."/>
            <person name="Vora K.A."/>
            <person name="Demartino J.A."/>
            <person name="van Aalten D.M."/>
        </authorList>
    </citation>
    <scope>X-RAY CRYSTALLOGRAPHY (1.90 ANGSTROMS) IN COMPLEX WITH INHIBITOR</scope>
    <scope>CATALYTIC ACTIVITY</scope>
    <scope>MUTAGENESIS OF TRP-137; THR-138; ASP-175; GLU-177; ALA-217; MET-243; TYR-245; ASP-246; ARG-301 AND GLU-322</scope>
    <scope>ACTIVITY REGULATION</scope>
</reference>
<reference evidence="19" key="8">
    <citation type="journal article" date="2006" name="J. Biol. Chem.">
        <title>Screening-based discovery and structural dissection of a novel family 18 chitinase inhibitor.</title>
        <authorList>
            <person name="Schuttelkopf A.W."/>
            <person name="Andersen O.A."/>
            <person name="Rao F.V."/>
            <person name="Allwood M."/>
            <person name="Lloyd C."/>
            <person name="Eggleston I.M."/>
            <person name="van Aalten D.M."/>
        </authorList>
    </citation>
    <scope>X-RAY CRYSTALLOGRAPHY (1.95 ANGSTROMS) IN COMPLEX WITH INHIBITOR</scope>
    <scope>ACTIVITY REGULATION</scope>
</reference>
<reference evidence="19" key="9">
    <citation type="journal article" date="2008" name="Chem. Biol.">
        <title>Structure-based dissection of the natural product cyclopentapeptide chitinase inhibitor argifin.</title>
        <authorList>
            <person name="Andersen O.A."/>
            <person name="Nathubhai A."/>
            <person name="Dixon M.J."/>
            <person name="Eggleston I.M."/>
            <person name="van Aalten D.M."/>
        </authorList>
    </citation>
    <scope>X-RAY CRYSTALLOGRAPHY (1.90 ANGSTROMS) IN COMPLEX WITH INHIBITOR</scope>
    <scope>ACTIVITY REGULATION</scope>
</reference>
<proteinExistence type="evidence at protein level"/>
<comment type="function">
    <text evidence="1">Major secreted chitinase involved in the degradation of chitin, a component of the cell walls of fungi and exoskeletal elements of some animals (including worms and arthropods). Plays a role in the morphogenesis and autolysis (By similarity).</text>
</comment>
<comment type="catalytic activity">
    <reaction evidence="4 5 6 7 10">
        <text>Random endo-hydrolysis of N-acetyl-beta-D-glucosaminide (1-&gt;4)-beta-linkages in chitin and chitodextrins.</text>
        <dbReference type="EC" id="3.2.1.14"/>
    </reaction>
</comment>
<comment type="activity regulation">
    <text evidence="5 7 8 9">Methylxanthine drugs surch as theophylline, caffeine and pentoxifylline, as well as the two cyclic peptide natural products argifin and argadin, act as specific inhibitors.</text>
</comment>
<comment type="biophysicochemical properties">
    <kinetics>
        <KM evidence="5 10">19.9 uM for 4-methylumbelliferyl beta-D-N,N'-diacetylchitobiose</KM>
        <KM evidence="5 10">2.94 mg/ml for chitosan</KM>
    </kinetics>
    <phDependence>
        <text evidence="5 10">Optimum pH is 5.0-7.0.</text>
    </phDependence>
    <temperatureDependence>
        <text evidence="5 10">Optimum temperature is 60 degrees Celsius.</text>
    </temperatureDependence>
</comment>
<comment type="subcellular location">
    <subcellularLocation>
        <location evidence="4 6">Secreted</location>
    </subcellularLocation>
</comment>
<comment type="induction">
    <text evidence="6">Induced during batch culture.</text>
</comment>
<comment type="disruption phenotype">
    <text evidence="4">Decreases the level of chitinase activity during the autolytic phase of batch cultures.</text>
</comment>
<comment type="similarity">
    <text evidence="11">Belongs to the glycosyl hydrolase 18 family. Chitinase class V subfamily.</text>
</comment>
<feature type="signal peptide" evidence="2">
    <location>
        <begin position="1"/>
        <end position="22"/>
    </location>
</feature>
<feature type="chain" id="PRO_0000429823" description="Endochitinase B1">
    <location>
        <begin position="23"/>
        <end position="433"/>
    </location>
</feature>
<feature type="domain" description="GH18" evidence="3">
    <location>
        <begin position="43"/>
        <end position="407"/>
    </location>
</feature>
<feature type="active site" description="Proton donor" evidence="3">
    <location>
        <position position="177"/>
    </location>
</feature>
<feature type="binding site" evidence="7 16">
    <location>
        <position position="52"/>
    </location>
    <ligand>
        <name>caffeine</name>
        <dbReference type="ChEBI" id="CHEBI:27732"/>
        <note>inhibitor</note>
    </ligand>
</feature>
<feature type="binding site" evidence="3">
    <location>
        <begin position="108"/>
        <end position="109"/>
    </location>
    <ligand>
        <name>chitin</name>
        <dbReference type="ChEBI" id="CHEBI:17029"/>
    </ligand>
</feature>
<feature type="binding site" evidence="3">
    <location>
        <begin position="135"/>
        <end position="138"/>
    </location>
    <ligand>
        <name>chitin</name>
        <dbReference type="ChEBI" id="CHEBI:17029"/>
    </ligand>
</feature>
<feature type="binding site" evidence="7 16">
    <location>
        <position position="137"/>
    </location>
    <ligand>
        <name>caffeine</name>
        <dbReference type="ChEBI" id="CHEBI:27732"/>
        <note>inhibitor</note>
    </ligand>
</feature>
<feature type="binding site" evidence="3">
    <location>
        <position position="178"/>
    </location>
    <ligand>
        <name>chitin</name>
        <dbReference type="ChEBI" id="CHEBI:17029"/>
    </ligand>
</feature>
<feature type="binding site" evidence="3">
    <location>
        <begin position="243"/>
        <end position="246"/>
    </location>
    <ligand>
        <name>chitin</name>
        <dbReference type="ChEBI" id="CHEBI:17029"/>
    </ligand>
</feature>
<feature type="binding site" evidence="7 16">
    <location>
        <position position="245"/>
    </location>
    <ligand>
        <name>caffeine</name>
        <dbReference type="ChEBI" id="CHEBI:27732"/>
        <note>inhibitor</note>
    </ligand>
</feature>
<feature type="binding site" evidence="7 16">
    <location>
        <position position="251"/>
    </location>
    <ligand>
        <name>caffeine</name>
        <dbReference type="ChEBI" id="CHEBI:27732"/>
        <note>inhibitor</note>
    </ligand>
</feature>
<feature type="binding site" evidence="7 16">
    <location>
        <position position="384"/>
    </location>
    <ligand>
        <name>caffeine</name>
        <dbReference type="ChEBI" id="CHEBI:27732"/>
        <note>inhibitor</note>
    </ligand>
</feature>
<feature type="binding site" evidence="3">
    <location>
        <position position="384"/>
    </location>
    <ligand>
        <name>chitin</name>
        <dbReference type="ChEBI" id="CHEBI:17029"/>
    </ligand>
</feature>
<feature type="glycosylation site" description="N-linked (GlcNAc...) asparagine" evidence="2">
    <location>
        <position position="263"/>
    </location>
</feature>
<feature type="mutagenesis site" description="Affects substrate-binding and completely abrogates argifin/argadin-binding." evidence="5 7 10">
    <original>W</original>
    <variation>A</variation>
    <location>
        <position position="137"/>
    </location>
</feature>
<feature type="mutagenesis site" description="Affects binding to argifin and argadin." evidence="5 7">
    <original>T</original>
    <variation>A</variation>
    <location>
        <position position="138"/>
    </location>
</feature>
<feature type="mutagenesis site" description="Impairs catalytic activity and decreases argifin/argadin-binding but not substrate-binding." evidence="5 7">
    <original>D</original>
    <variation>A</variation>
    <location>
        <position position="175"/>
    </location>
</feature>
<feature type="mutagenesis site" description="Impairs catalytic activity and decreases argifin/argadin-binding but not substrate-binding." evidence="5 7">
    <original>E</original>
    <variation>A</variation>
    <location>
        <position position="177"/>
    </location>
</feature>
<feature type="mutagenesis site" description="Affects binding to argifin." evidence="5 7">
    <original>A</original>
    <variation>G</variation>
    <location>
        <position position="217"/>
    </location>
</feature>
<feature type="mutagenesis site" description="Affects binding to argadin." evidence="5 7 10">
    <original>M</original>
    <variation>A</variation>
    <location>
        <position position="243"/>
    </location>
</feature>
<feature type="mutagenesis site" description="Impairs catalytic activity and decreases argifin/argadin-binding but not substrate-binding." evidence="5 7">
    <original>Y</original>
    <variation>F</variation>
    <location>
        <position position="245"/>
    </location>
</feature>
<feature type="mutagenesis site" description="Impairs catalytic activity and decreases argifin/argadin-binding but not substrate-binding." evidence="5 7 10">
    <original>D</original>
    <variation>A</variation>
    <location>
        <position position="246"/>
    </location>
</feature>
<feature type="mutagenesis site" description="Affects substrate-binding and completely abrogates argifin/argadin-binding." evidence="5">
    <original>F</original>
    <variation>A</variation>
    <location>
        <position position="251"/>
    </location>
</feature>
<feature type="mutagenesis site" description="Impairs catalytic activity but not substrate-binding." evidence="5 7">
    <original>R</original>
    <variation>K</variation>
    <location>
        <position position="301"/>
    </location>
</feature>
<feature type="mutagenesis site" description="Affects binding to argifin and argadin." evidence="5 7">
    <original>E</original>
    <variation>A</variation>
    <location>
        <position position="322"/>
    </location>
</feature>
<feature type="strand" evidence="20">
    <location>
        <begin position="43"/>
        <end position="50"/>
    </location>
</feature>
<feature type="helix" evidence="20">
    <location>
        <begin position="51"/>
        <end position="54"/>
    </location>
</feature>
<feature type="helix" evidence="20">
    <location>
        <begin position="61"/>
        <end position="63"/>
    </location>
</feature>
<feature type="helix" evidence="20">
    <location>
        <begin position="66"/>
        <end position="68"/>
    </location>
</feature>
<feature type="strand" evidence="20">
    <location>
        <begin position="70"/>
        <end position="79"/>
    </location>
</feature>
<feature type="turn" evidence="20">
    <location>
        <begin position="81"/>
        <end position="83"/>
    </location>
</feature>
<feature type="strand" evidence="20">
    <location>
        <begin position="86"/>
        <end position="89"/>
    </location>
</feature>
<feature type="helix" evidence="20">
    <location>
        <begin position="91"/>
        <end position="95"/>
    </location>
</feature>
<feature type="helix" evidence="20">
    <location>
        <begin position="113"/>
        <end position="124"/>
    </location>
</feature>
<feature type="strand" evidence="20">
    <location>
        <begin position="129"/>
        <end position="135"/>
    </location>
</feature>
<feature type="turn" evidence="20">
    <location>
        <begin position="137"/>
        <end position="139"/>
    </location>
</feature>
<feature type="helix" evidence="20">
    <location>
        <begin position="140"/>
        <end position="142"/>
    </location>
</feature>
<feature type="helix" evidence="20">
    <location>
        <begin position="143"/>
        <end position="147"/>
    </location>
</feature>
<feature type="helix" evidence="20">
    <location>
        <begin position="150"/>
        <end position="167"/>
    </location>
</feature>
<feature type="strand" evidence="20">
    <location>
        <begin position="170"/>
        <end position="175"/>
    </location>
</feature>
<feature type="helix" evidence="20">
    <location>
        <begin position="182"/>
        <end position="206"/>
    </location>
</feature>
<feature type="strand" evidence="22">
    <location>
        <begin position="207"/>
        <end position="209"/>
    </location>
</feature>
<feature type="strand" evidence="20">
    <location>
        <begin position="213"/>
        <end position="218"/>
    </location>
</feature>
<feature type="helix" evidence="20">
    <location>
        <begin position="222"/>
        <end position="227"/>
    </location>
</feature>
<feature type="helix" evidence="20">
    <location>
        <begin position="230"/>
        <end position="234"/>
    </location>
</feature>
<feature type="strand" evidence="20">
    <location>
        <begin position="238"/>
        <end position="242"/>
    </location>
</feature>
<feature type="strand" evidence="21">
    <location>
        <begin position="247"/>
        <end position="249"/>
    </location>
</feature>
<feature type="strand" evidence="20">
    <location>
        <begin position="252"/>
        <end position="254"/>
    </location>
</feature>
<feature type="helix" evidence="20">
    <location>
        <begin position="268"/>
        <end position="270"/>
    </location>
</feature>
<feature type="helix" evidence="20">
    <location>
        <begin position="275"/>
        <end position="284"/>
    </location>
</feature>
<feature type="helix" evidence="20">
    <location>
        <begin position="289"/>
        <end position="291"/>
    </location>
</feature>
<feature type="strand" evidence="20">
    <location>
        <begin position="292"/>
        <end position="305"/>
    </location>
</feature>
<feature type="strand" evidence="20">
    <location>
        <begin position="320"/>
        <end position="322"/>
    </location>
</feature>
<feature type="strand" evidence="20">
    <location>
        <begin position="325"/>
        <end position="327"/>
    </location>
</feature>
<feature type="helix" evidence="20">
    <location>
        <begin position="328"/>
        <end position="330"/>
    </location>
</feature>
<feature type="strand" evidence="20">
    <location>
        <begin position="337"/>
        <end position="341"/>
    </location>
</feature>
<feature type="helix" evidence="20">
    <location>
        <begin position="342"/>
        <end position="344"/>
    </location>
</feature>
<feature type="strand" evidence="20">
    <location>
        <begin position="346"/>
        <end position="351"/>
    </location>
</feature>
<feature type="turn" evidence="20">
    <location>
        <begin position="352"/>
        <end position="355"/>
    </location>
</feature>
<feature type="strand" evidence="20">
    <location>
        <begin position="356"/>
        <end position="359"/>
    </location>
</feature>
<feature type="helix" evidence="20">
    <location>
        <begin position="363"/>
        <end position="376"/>
    </location>
</feature>
<feature type="strand" evidence="20">
    <location>
        <begin position="380"/>
        <end position="384"/>
    </location>
</feature>
<feature type="helix" evidence="20">
    <location>
        <begin position="386"/>
        <end position="388"/>
    </location>
</feature>
<feature type="helix" evidence="20">
    <location>
        <begin position="392"/>
        <end position="394"/>
    </location>
</feature>
<feature type="helix" evidence="20">
    <location>
        <begin position="396"/>
        <end position="403"/>
    </location>
</feature>
<feature type="helix" evidence="20">
    <location>
        <begin position="407"/>
        <end position="409"/>
    </location>
</feature>
<feature type="helix" evidence="20">
    <location>
        <begin position="425"/>
        <end position="428"/>
    </location>
</feature>
<evidence type="ECO:0000250" key="1"/>
<evidence type="ECO:0000255" key="2"/>
<evidence type="ECO:0000255" key="3">
    <source>
        <dbReference type="PROSITE-ProRule" id="PRU01258"/>
    </source>
</evidence>
<evidence type="ECO:0000269" key="4">
    <source>
    </source>
</evidence>
<evidence type="ECO:0000269" key="5">
    <source>
    </source>
</evidence>
<evidence type="ECO:0000269" key="6">
    <source>
    </source>
</evidence>
<evidence type="ECO:0000269" key="7">
    <source>
    </source>
</evidence>
<evidence type="ECO:0000269" key="8">
    <source>
    </source>
</evidence>
<evidence type="ECO:0000269" key="9">
    <source>
    </source>
</evidence>
<evidence type="ECO:0000269" key="10">
    <source>
    </source>
</evidence>
<evidence type="ECO:0000305" key="11"/>
<evidence type="ECO:0007744" key="12">
    <source>
        <dbReference type="PDB" id="1W9P"/>
    </source>
</evidence>
<evidence type="ECO:0007744" key="13">
    <source>
        <dbReference type="PDB" id="1W9U"/>
    </source>
</evidence>
<evidence type="ECO:0007744" key="14">
    <source>
        <dbReference type="PDB" id="1W9V"/>
    </source>
</evidence>
<evidence type="ECO:0007744" key="15">
    <source>
        <dbReference type="PDB" id="2A3A"/>
    </source>
</evidence>
<evidence type="ECO:0007744" key="16">
    <source>
        <dbReference type="PDB" id="2A3B"/>
    </source>
</evidence>
<evidence type="ECO:0007744" key="17">
    <source>
        <dbReference type="PDB" id="2A3C"/>
    </source>
</evidence>
<evidence type="ECO:0007744" key="18">
    <source>
        <dbReference type="PDB" id="2A3E"/>
    </source>
</evidence>
<evidence type="ECO:0007744" key="19">
    <source>
        <dbReference type="PDB" id="2IUZ"/>
    </source>
</evidence>
<evidence type="ECO:0007829" key="20">
    <source>
        <dbReference type="PDB" id="1W9P"/>
    </source>
</evidence>
<evidence type="ECO:0007829" key="21">
    <source>
        <dbReference type="PDB" id="1W9U"/>
    </source>
</evidence>
<evidence type="ECO:0007829" key="22">
    <source>
        <dbReference type="PDB" id="1WNO"/>
    </source>
</evidence>
<keyword id="KW-0002">3D-structure</keyword>
<keyword id="KW-0119">Carbohydrate metabolism</keyword>
<keyword id="KW-0146">Chitin degradation</keyword>
<keyword id="KW-0325">Glycoprotein</keyword>
<keyword id="KW-0326">Glycosidase</keyword>
<keyword id="KW-0378">Hydrolase</keyword>
<keyword id="KW-0624">Polysaccharide degradation</keyword>
<keyword id="KW-0964">Secreted</keyword>
<keyword id="KW-0732">Signal</keyword>
<name>CHIB1_ASPFM</name>
<sequence>MRFATSTIVKVALLLSSLCVDAAVMWNRDTSSTDLEARASSGYRSVVYFVNWAIYGRNHNPQDLPVERLTHVLYAFANVRPETGEVYMTDSWADIEKHYPGDSWSDTGNNVYGCIKQLYLLKKQNRNLKVLLSIGGWTYSPNFAPAASTDAGRKNFAKTAVKLLQDLGFDGLDIDWEYPENDQQANDFVLLLKEVRTALDSYSAANAGGQHFLLTVASPAGPDKIKVLHLKDMDQQLDFWNLMAYDYAGSFSSLSGHQANVYNDTSNPLSTPFNTQTALDLYRAGGVPANKIVLGMPLYGRSFANTDGPGKPYNGVGQGSWENGVWDYKALPQAGATEHVLPDIMASYSYDATNKFLISYDNPQVANLKSGYIKSLGLGGAMWWDSSSDKTGSDSLITTVVNALGGTGVFEQSQNELDYPVSQYDNLRNGMQT</sequence>
<protein>
    <recommendedName>
        <fullName>Endochitinase B1</fullName>
        <ecNumber>3.2.1.14</ecNumber>
    </recommendedName>
    <alternativeName>
        <fullName>Chitinase B1</fullName>
    </alternativeName>
</protein>
<dbReference type="EC" id="3.2.1.14"/>
<dbReference type="EMBL" id="AY217660">
    <property type="protein sequence ID" value="AAO61686.1"/>
    <property type="molecule type" value="Genomic_DNA"/>
</dbReference>
<dbReference type="PDB" id="1W9P">
    <property type="method" value="X-ray"/>
    <property type="resolution" value="1.70 A"/>
    <property type="chains" value="A/B=1-433"/>
</dbReference>
<dbReference type="PDB" id="1W9U">
    <property type="method" value="X-ray"/>
    <property type="resolution" value="1.85 A"/>
    <property type="chains" value="A/B=1-433"/>
</dbReference>
<dbReference type="PDB" id="1W9V">
    <property type="method" value="X-ray"/>
    <property type="resolution" value="2.00 A"/>
    <property type="chains" value="A/B=1-433"/>
</dbReference>
<dbReference type="PDB" id="1WNO">
    <property type="method" value="X-ray"/>
    <property type="resolution" value="2.10 A"/>
    <property type="chains" value="A/B=39-433"/>
</dbReference>
<dbReference type="PDB" id="2A3A">
    <property type="method" value="X-ray"/>
    <property type="resolution" value="2.10 A"/>
    <property type="chains" value="A/B=1-433"/>
</dbReference>
<dbReference type="PDB" id="2A3B">
    <property type="method" value="X-ray"/>
    <property type="resolution" value="1.90 A"/>
    <property type="chains" value="A/B=1-433"/>
</dbReference>
<dbReference type="PDB" id="2A3C">
    <property type="method" value="X-ray"/>
    <property type="resolution" value="2.07 A"/>
    <property type="chains" value="A/B=1-433"/>
</dbReference>
<dbReference type="PDB" id="2A3E">
    <property type="method" value="X-ray"/>
    <property type="resolution" value="1.95 A"/>
    <property type="chains" value="A/B=1-433"/>
</dbReference>
<dbReference type="PDB" id="2IUZ">
    <property type="method" value="X-ray"/>
    <property type="resolution" value="1.95 A"/>
    <property type="chains" value="A/B=1-433"/>
</dbReference>
<dbReference type="PDB" id="3CH9">
    <property type="method" value="X-ray"/>
    <property type="resolution" value="2.20 A"/>
    <property type="chains" value="A/B=1-433"/>
</dbReference>
<dbReference type="PDB" id="3CHC">
    <property type="method" value="X-ray"/>
    <property type="resolution" value="1.90 A"/>
    <property type="chains" value="A/B=1-433"/>
</dbReference>
<dbReference type="PDB" id="3CHD">
    <property type="method" value="X-ray"/>
    <property type="resolution" value="2.00 A"/>
    <property type="chains" value="A/B=1-433"/>
</dbReference>
<dbReference type="PDB" id="3CHE">
    <property type="method" value="X-ray"/>
    <property type="resolution" value="2.05 A"/>
    <property type="chains" value="A/B=1-433"/>
</dbReference>
<dbReference type="PDB" id="3CHF">
    <property type="method" value="X-ray"/>
    <property type="resolution" value="1.95 A"/>
    <property type="chains" value="A/B=1-433"/>
</dbReference>
<dbReference type="PDBsum" id="1W9P"/>
<dbReference type="PDBsum" id="1W9U"/>
<dbReference type="PDBsum" id="1W9V"/>
<dbReference type="PDBsum" id="1WNO"/>
<dbReference type="PDBsum" id="2A3A"/>
<dbReference type="PDBsum" id="2A3B"/>
<dbReference type="PDBsum" id="2A3C"/>
<dbReference type="PDBsum" id="2A3E"/>
<dbReference type="PDBsum" id="2IUZ"/>
<dbReference type="PDBsum" id="3CH9"/>
<dbReference type="PDBsum" id="3CHC"/>
<dbReference type="PDBsum" id="3CHD"/>
<dbReference type="PDBsum" id="3CHE"/>
<dbReference type="PDBsum" id="3CHF"/>
<dbReference type="SMR" id="Q873X9"/>
<dbReference type="BindingDB" id="Q873X9"/>
<dbReference type="ChEMBL" id="CHEMBL4638"/>
<dbReference type="DrugBank" id="DB04350">
    <property type="generic name" value="Argadin"/>
</dbReference>
<dbReference type="DrugBank" id="DB03632">
    <property type="generic name" value="Argifin"/>
</dbReference>
<dbReference type="CAZy" id="GH18">
    <property type="family name" value="Glycoside Hydrolase Family 18"/>
</dbReference>
<dbReference type="GlyCosmos" id="Q873X9">
    <property type="glycosylation" value="1 site, No reported glycans"/>
</dbReference>
<dbReference type="OMA" id="WMGNFTA"/>
<dbReference type="EvolutionaryTrace" id="Q873X9"/>
<dbReference type="GO" id="GO:0005576">
    <property type="term" value="C:extracellular region"/>
    <property type="evidence" value="ECO:0007669"/>
    <property type="project" value="UniProtKB-SubCell"/>
</dbReference>
<dbReference type="GO" id="GO:0008061">
    <property type="term" value="F:chitin binding"/>
    <property type="evidence" value="ECO:0007669"/>
    <property type="project" value="InterPro"/>
</dbReference>
<dbReference type="GO" id="GO:0008843">
    <property type="term" value="F:endochitinase activity"/>
    <property type="evidence" value="ECO:0007669"/>
    <property type="project" value="UniProtKB-EC"/>
</dbReference>
<dbReference type="GO" id="GO:0006032">
    <property type="term" value="P:chitin catabolic process"/>
    <property type="evidence" value="ECO:0007669"/>
    <property type="project" value="UniProtKB-KW"/>
</dbReference>
<dbReference type="GO" id="GO:0000272">
    <property type="term" value="P:polysaccharide catabolic process"/>
    <property type="evidence" value="ECO:0007669"/>
    <property type="project" value="UniProtKB-KW"/>
</dbReference>
<dbReference type="CDD" id="cd06548">
    <property type="entry name" value="GH18_chitinase"/>
    <property type="match status" value="1"/>
</dbReference>
<dbReference type="FunFam" id="3.10.50.10:FF:000005">
    <property type="entry name" value="Endochitinase B1"/>
    <property type="match status" value="1"/>
</dbReference>
<dbReference type="FunFam" id="3.20.20.80:FF:000095">
    <property type="entry name" value="Endochitinase B1"/>
    <property type="match status" value="1"/>
</dbReference>
<dbReference type="Gene3D" id="3.10.50.10">
    <property type="match status" value="1"/>
</dbReference>
<dbReference type="Gene3D" id="3.20.20.80">
    <property type="entry name" value="Glycosidases"/>
    <property type="match status" value="1"/>
</dbReference>
<dbReference type="InterPro" id="IPR011583">
    <property type="entry name" value="Chitinase_II/V-like_cat"/>
</dbReference>
<dbReference type="InterPro" id="IPR029070">
    <property type="entry name" value="Chitinase_insertion_sf"/>
</dbReference>
<dbReference type="InterPro" id="IPR001223">
    <property type="entry name" value="Glyco_hydro18_cat"/>
</dbReference>
<dbReference type="InterPro" id="IPR001579">
    <property type="entry name" value="Glyco_hydro_18_chit_AS"/>
</dbReference>
<dbReference type="InterPro" id="IPR017853">
    <property type="entry name" value="Glycoside_hydrolase_SF"/>
</dbReference>
<dbReference type="InterPro" id="IPR050314">
    <property type="entry name" value="Glycosyl_Hydrlase_18"/>
</dbReference>
<dbReference type="PANTHER" id="PTHR11177">
    <property type="entry name" value="CHITINASE"/>
    <property type="match status" value="1"/>
</dbReference>
<dbReference type="PANTHER" id="PTHR11177:SF317">
    <property type="entry name" value="CHITINASE 12-RELATED"/>
    <property type="match status" value="1"/>
</dbReference>
<dbReference type="Pfam" id="PF00704">
    <property type="entry name" value="Glyco_hydro_18"/>
    <property type="match status" value="1"/>
</dbReference>
<dbReference type="SMART" id="SM00636">
    <property type="entry name" value="Glyco_18"/>
    <property type="match status" value="1"/>
</dbReference>
<dbReference type="SUPFAM" id="SSF51445">
    <property type="entry name" value="(Trans)glycosidases"/>
    <property type="match status" value="1"/>
</dbReference>
<dbReference type="SUPFAM" id="SSF54556">
    <property type="entry name" value="Chitinase insertion domain"/>
    <property type="match status" value="1"/>
</dbReference>
<dbReference type="PROSITE" id="PS01095">
    <property type="entry name" value="GH18_1"/>
    <property type="match status" value="1"/>
</dbReference>
<dbReference type="PROSITE" id="PS51910">
    <property type="entry name" value="GH18_2"/>
    <property type="match status" value="1"/>
</dbReference>
<organism>
    <name type="scientific">Aspergillus fumigatus</name>
    <name type="common">Neosartorya fumigata</name>
    <dbReference type="NCBI Taxonomy" id="746128"/>
    <lineage>
        <taxon>Eukaryota</taxon>
        <taxon>Fungi</taxon>
        <taxon>Dikarya</taxon>
        <taxon>Ascomycota</taxon>
        <taxon>Pezizomycotina</taxon>
        <taxon>Eurotiomycetes</taxon>
        <taxon>Eurotiomycetidae</taxon>
        <taxon>Eurotiales</taxon>
        <taxon>Aspergillaceae</taxon>
        <taxon>Aspergillus</taxon>
        <taxon>Aspergillus subgen. Fumigati</taxon>
    </lineage>
</organism>